<organism>
    <name type="scientific">Burkholderia pseudomallei (strain 668)</name>
    <dbReference type="NCBI Taxonomy" id="320373"/>
    <lineage>
        <taxon>Bacteria</taxon>
        <taxon>Pseudomonadati</taxon>
        <taxon>Pseudomonadota</taxon>
        <taxon>Betaproteobacteria</taxon>
        <taxon>Burkholderiales</taxon>
        <taxon>Burkholderiaceae</taxon>
        <taxon>Burkholderia</taxon>
        <taxon>pseudomallei group</taxon>
    </lineage>
</organism>
<accession>A3NDZ3</accession>
<evidence type="ECO:0000255" key="1">
    <source>
        <dbReference type="HAMAP-Rule" id="MF_00134"/>
    </source>
</evidence>
<reference key="1">
    <citation type="journal article" date="2010" name="Genome Biol. Evol.">
        <title>Continuing evolution of Burkholderia mallei through genome reduction and large-scale rearrangements.</title>
        <authorList>
            <person name="Losada L."/>
            <person name="Ronning C.M."/>
            <person name="DeShazer D."/>
            <person name="Woods D."/>
            <person name="Fedorova N."/>
            <person name="Kim H.S."/>
            <person name="Shabalina S.A."/>
            <person name="Pearson T.R."/>
            <person name="Brinkac L."/>
            <person name="Tan P."/>
            <person name="Nandi T."/>
            <person name="Crabtree J."/>
            <person name="Badger J."/>
            <person name="Beckstrom-Sternberg S."/>
            <person name="Saqib M."/>
            <person name="Schutzer S.E."/>
            <person name="Keim P."/>
            <person name="Nierman W.C."/>
        </authorList>
    </citation>
    <scope>NUCLEOTIDE SEQUENCE [LARGE SCALE GENOMIC DNA]</scope>
    <source>
        <strain>668</strain>
    </source>
</reference>
<sequence>MSDILDKIIAVKREEIAAALESAPLEELKVQASARDSRDFVGALRDKHAAGHAAVIAEVKKASPSKGVLREHFVPADIARSYAQHGAACLSVLTDERFFQGSARYLEQARAACALPVLRKDFIVDAYQVLEARAMGADAILLIAAALDTPLMIDLEAYAHSLGLAVLVEVHNRSELDEALKLKTPLVGINNRNLRTFETTIDTTLGMLDAIPDDRIVVTESGILSRADVERMEAAGVHTFLVGEAFMRAENPGAELARMFF</sequence>
<protein>
    <recommendedName>
        <fullName evidence="1">Indole-3-glycerol phosphate synthase</fullName>
        <shortName evidence="1">IGPS</shortName>
        <ecNumber evidence="1">4.1.1.48</ecNumber>
    </recommendedName>
</protein>
<proteinExistence type="inferred from homology"/>
<feature type="chain" id="PRO_1000018460" description="Indole-3-glycerol phosphate synthase">
    <location>
        <begin position="1"/>
        <end position="261"/>
    </location>
</feature>
<gene>
    <name evidence="1" type="primary">trpC</name>
    <name type="ordered locus">BURPS668_3559</name>
</gene>
<dbReference type="EC" id="4.1.1.48" evidence="1"/>
<dbReference type="EMBL" id="CP000570">
    <property type="protein sequence ID" value="ABN83518.1"/>
    <property type="molecule type" value="Genomic_DNA"/>
</dbReference>
<dbReference type="RefSeq" id="WP_011852247.1">
    <property type="nucleotide sequence ID" value="NC_009074.1"/>
</dbReference>
<dbReference type="SMR" id="A3NDZ3"/>
<dbReference type="KEGG" id="bpd:BURPS668_3559"/>
<dbReference type="HOGENOM" id="CLU_034247_2_0_4"/>
<dbReference type="UniPathway" id="UPA00035">
    <property type="reaction ID" value="UER00043"/>
</dbReference>
<dbReference type="GO" id="GO:0004425">
    <property type="term" value="F:indole-3-glycerol-phosphate synthase activity"/>
    <property type="evidence" value="ECO:0007669"/>
    <property type="project" value="UniProtKB-UniRule"/>
</dbReference>
<dbReference type="GO" id="GO:0004640">
    <property type="term" value="F:phosphoribosylanthranilate isomerase activity"/>
    <property type="evidence" value="ECO:0007669"/>
    <property type="project" value="TreeGrafter"/>
</dbReference>
<dbReference type="GO" id="GO:0000162">
    <property type="term" value="P:L-tryptophan biosynthetic process"/>
    <property type="evidence" value="ECO:0007669"/>
    <property type="project" value="UniProtKB-UniRule"/>
</dbReference>
<dbReference type="CDD" id="cd00331">
    <property type="entry name" value="IGPS"/>
    <property type="match status" value="1"/>
</dbReference>
<dbReference type="FunFam" id="3.20.20.70:FF:000024">
    <property type="entry name" value="Indole-3-glycerol phosphate synthase"/>
    <property type="match status" value="1"/>
</dbReference>
<dbReference type="Gene3D" id="3.20.20.70">
    <property type="entry name" value="Aldolase class I"/>
    <property type="match status" value="1"/>
</dbReference>
<dbReference type="HAMAP" id="MF_00134_B">
    <property type="entry name" value="IGPS_B"/>
    <property type="match status" value="1"/>
</dbReference>
<dbReference type="InterPro" id="IPR013785">
    <property type="entry name" value="Aldolase_TIM"/>
</dbReference>
<dbReference type="InterPro" id="IPR045186">
    <property type="entry name" value="Indole-3-glycerol_P_synth"/>
</dbReference>
<dbReference type="InterPro" id="IPR013798">
    <property type="entry name" value="Indole-3-glycerol_P_synth_dom"/>
</dbReference>
<dbReference type="InterPro" id="IPR001468">
    <property type="entry name" value="Indole-3-GlycerolPSynthase_CS"/>
</dbReference>
<dbReference type="InterPro" id="IPR011060">
    <property type="entry name" value="RibuloseP-bd_barrel"/>
</dbReference>
<dbReference type="NCBIfam" id="NF001373">
    <property type="entry name" value="PRK00278.1-6"/>
    <property type="match status" value="1"/>
</dbReference>
<dbReference type="NCBIfam" id="NF001377">
    <property type="entry name" value="PRK00278.2-4"/>
    <property type="match status" value="1"/>
</dbReference>
<dbReference type="PANTHER" id="PTHR22854:SF2">
    <property type="entry name" value="INDOLE-3-GLYCEROL-PHOSPHATE SYNTHASE"/>
    <property type="match status" value="1"/>
</dbReference>
<dbReference type="PANTHER" id="PTHR22854">
    <property type="entry name" value="TRYPTOPHAN BIOSYNTHESIS PROTEIN"/>
    <property type="match status" value="1"/>
</dbReference>
<dbReference type="Pfam" id="PF00218">
    <property type="entry name" value="IGPS"/>
    <property type="match status" value="1"/>
</dbReference>
<dbReference type="SUPFAM" id="SSF51366">
    <property type="entry name" value="Ribulose-phoshate binding barrel"/>
    <property type="match status" value="1"/>
</dbReference>
<dbReference type="PROSITE" id="PS00614">
    <property type="entry name" value="IGPS"/>
    <property type="match status" value="1"/>
</dbReference>
<name>TRPC_BURP6</name>
<keyword id="KW-0028">Amino-acid biosynthesis</keyword>
<keyword id="KW-0057">Aromatic amino acid biosynthesis</keyword>
<keyword id="KW-0210">Decarboxylase</keyword>
<keyword id="KW-0456">Lyase</keyword>
<keyword id="KW-0822">Tryptophan biosynthesis</keyword>
<comment type="catalytic activity">
    <reaction evidence="1">
        <text>1-(2-carboxyphenylamino)-1-deoxy-D-ribulose 5-phosphate + H(+) = (1S,2R)-1-C-(indol-3-yl)glycerol 3-phosphate + CO2 + H2O</text>
        <dbReference type="Rhea" id="RHEA:23476"/>
        <dbReference type="ChEBI" id="CHEBI:15377"/>
        <dbReference type="ChEBI" id="CHEBI:15378"/>
        <dbReference type="ChEBI" id="CHEBI:16526"/>
        <dbReference type="ChEBI" id="CHEBI:58613"/>
        <dbReference type="ChEBI" id="CHEBI:58866"/>
        <dbReference type="EC" id="4.1.1.48"/>
    </reaction>
</comment>
<comment type="pathway">
    <text evidence="1">Amino-acid biosynthesis; L-tryptophan biosynthesis; L-tryptophan from chorismate: step 4/5.</text>
</comment>
<comment type="similarity">
    <text evidence="1">Belongs to the TrpC family.</text>
</comment>